<reference key="1">
    <citation type="journal article" date="2001" name="Science">
        <title>The genome of the natural genetic engineer Agrobacterium tumefaciens C58.</title>
        <authorList>
            <person name="Wood D.W."/>
            <person name="Setubal J.C."/>
            <person name="Kaul R."/>
            <person name="Monks D.E."/>
            <person name="Kitajima J.P."/>
            <person name="Okura V.K."/>
            <person name="Zhou Y."/>
            <person name="Chen L."/>
            <person name="Wood G.E."/>
            <person name="Almeida N.F. Jr."/>
            <person name="Woo L."/>
            <person name="Chen Y."/>
            <person name="Paulsen I.T."/>
            <person name="Eisen J.A."/>
            <person name="Karp P.D."/>
            <person name="Bovee D. Sr."/>
            <person name="Chapman P."/>
            <person name="Clendenning J."/>
            <person name="Deatherage G."/>
            <person name="Gillet W."/>
            <person name="Grant C."/>
            <person name="Kutyavin T."/>
            <person name="Levy R."/>
            <person name="Li M.-J."/>
            <person name="McClelland E."/>
            <person name="Palmieri A."/>
            <person name="Raymond C."/>
            <person name="Rouse G."/>
            <person name="Saenphimmachak C."/>
            <person name="Wu Z."/>
            <person name="Romero P."/>
            <person name="Gordon D."/>
            <person name="Zhang S."/>
            <person name="Yoo H."/>
            <person name="Tao Y."/>
            <person name="Biddle P."/>
            <person name="Jung M."/>
            <person name="Krespan W."/>
            <person name="Perry M."/>
            <person name="Gordon-Kamm B."/>
            <person name="Liao L."/>
            <person name="Kim S."/>
            <person name="Hendrick C."/>
            <person name="Zhao Z.-Y."/>
            <person name="Dolan M."/>
            <person name="Chumley F."/>
            <person name="Tingey S.V."/>
            <person name="Tomb J.-F."/>
            <person name="Gordon M.P."/>
            <person name="Olson M.V."/>
            <person name="Nester E.W."/>
        </authorList>
    </citation>
    <scope>NUCLEOTIDE SEQUENCE [LARGE SCALE GENOMIC DNA]</scope>
    <source>
        <strain>C58 / ATCC 33970</strain>
    </source>
</reference>
<reference key="2">
    <citation type="journal article" date="2001" name="Science">
        <title>Genome sequence of the plant pathogen and biotechnology agent Agrobacterium tumefaciens C58.</title>
        <authorList>
            <person name="Goodner B."/>
            <person name="Hinkle G."/>
            <person name="Gattung S."/>
            <person name="Miller N."/>
            <person name="Blanchard M."/>
            <person name="Qurollo B."/>
            <person name="Goldman B.S."/>
            <person name="Cao Y."/>
            <person name="Askenazi M."/>
            <person name="Halling C."/>
            <person name="Mullin L."/>
            <person name="Houmiel K."/>
            <person name="Gordon J."/>
            <person name="Vaudin M."/>
            <person name="Iartchouk O."/>
            <person name="Epp A."/>
            <person name="Liu F."/>
            <person name="Wollam C."/>
            <person name="Allinger M."/>
            <person name="Doughty D."/>
            <person name="Scott C."/>
            <person name="Lappas C."/>
            <person name="Markelz B."/>
            <person name="Flanagan C."/>
            <person name="Crowell C."/>
            <person name="Gurson J."/>
            <person name="Lomo C."/>
            <person name="Sear C."/>
            <person name="Strub G."/>
            <person name="Cielo C."/>
            <person name="Slater S."/>
        </authorList>
    </citation>
    <scope>NUCLEOTIDE SEQUENCE [LARGE SCALE GENOMIC DNA]</scope>
    <source>
        <strain>C58 / ATCC 33970</strain>
    </source>
</reference>
<proteinExistence type="inferred from homology"/>
<name>RS10_AGRFC</name>
<feature type="chain" id="PRO_0000146485" description="Small ribosomal subunit protein uS10">
    <location>
        <begin position="1"/>
        <end position="102"/>
    </location>
</feature>
<accession>Q8UE17</accession>
<protein>
    <recommendedName>
        <fullName evidence="1">Small ribosomal subunit protein uS10</fullName>
    </recommendedName>
    <alternativeName>
        <fullName evidence="2">30S ribosomal protein S10</fullName>
    </alternativeName>
</protein>
<keyword id="KW-1185">Reference proteome</keyword>
<keyword id="KW-0687">Ribonucleoprotein</keyword>
<keyword id="KW-0689">Ribosomal protein</keyword>
<sequence length="102" mass="11543">MTGQNIRIRLKAFDHRILDASTREIVSTAKRTGASVRGPVPLPTRIEKFTVNRSPHVDKKSREQFEMRTHKRLLDIVDPTPQTVDALMKLDLAAGVDVEIKL</sequence>
<evidence type="ECO:0000255" key="1">
    <source>
        <dbReference type="HAMAP-Rule" id="MF_00508"/>
    </source>
</evidence>
<evidence type="ECO:0000305" key="2"/>
<comment type="function">
    <text evidence="1">Involved in the binding of tRNA to the ribosomes.</text>
</comment>
<comment type="subunit">
    <text evidence="1">Part of the 30S ribosomal subunit.</text>
</comment>
<comment type="similarity">
    <text evidence="1">Belongs to the universal ribosomal protein uS10 family.</text>
</comment>
<dbReference type="EMBL" id="AE007869">
    <property type="protein sequence ID" value="AAL42943.1"/>
    <property type="molecule type" value="Genomic_DNA"/>
</dbReference>
<dbReference type="PIR" id="AI2815">
    <property type="entry name" value="AI2815"/>
</dbReference>
<dbReference type="RefSeq" id="NP_529842.1">
    <property type="nucleotide sequence ID" value="NC_003062.2"/>
</dbReference>
<dbReference type="RefSeq" id="WP_003495158.1">
    <property type="nucleotide sequence ID" value="NC_003062.2"/>
</dbReference>
<dbReference type="SMR" id="Q8UE17"/>
<dbReference type="STRING" id="176299.Atu1947"/>
<dbReference type="EnsemblBacteria" id="AAL42943">
    <property type="protein sequence ID" value="AAL42943"/>
    <property type="gene ID" value="Atu1947"/>
</dbReference>
<dbReference type="GeneID" id="1133985"/>
<dbReference type="KEGG" id="atu:Atu1947"/>
<dbReference type="PATRIC" id="fig|176299.10.peg.1959"/>
<dbReference type="eggNOG" id="COG0051">
    <property type="taxonomic scope" value="Bacteria"/>
</dbReference>
<dbReference type="HOGENOM" id="CLU_122625_1_3_5"/>
<dbReference type="OrthoDB" id="9804464at2"/>
<dbReference type="PhylomeDB" id="Q8UE17"/>
<dbReference type="BioCyc" id="AGRO:ATU1947-MONOMER"/>
<dbReference type="PRO" id="PR:Q8UE17"/>
<dbReference type="Proteomes" id="UP000000813">
    <property type="component" value="Chromosome circular"/>
</dbReference>
<dbReference type="GO" id="GO:1990904">
    <property type="term" value="C:ribonucleoprotein complex"/>
    <property type="evidence" value="ECO:0007669"/>
    <property type="project" value="UniProtKB-KW"/>
</dbReference>
<dbReference type="GO" id="GO:0005840">
    <property type="term" value="C:ribosome"/>
    <property type="evidence" value="ECO:0007669"/>
    <property type="project" value="UniProtKB-KW"/>
</dbReference>
<dbReference type="GO" id="GO:0003735">
    <property type="term" value="F:structural constituent of ribosome"/>
    <property type="evidence" value="ECO:0007669"/>
    <property type="project" value="InterPro"/>
</dbReference>
<dbReference type="GO" id="GO:0000049">
    <property type="term" value="F:tRNA binding"/>
    <property type="evidence" value="ECO:0007669"/>
    <property type="project" value="UniProtKB-UniRule"/>
</dbReference>
<dbReference type="GO" id="GO:0006412">
    <property type="term" value="P:translation"/>
    <property type="evidence" value="ECO:0007669"/>
    <property type="project" value="UniProtKB-UniRule"/>
</dbReference>
<dbReference type="FunFam" id="3.30.70.600:FF:000001">
    <property type="entry name" value="30S ribosomal protein S10"/>
    <property type="match status" value="1"/>
</dbReference>
<dbReference type="Gene3D" id="3.30.70.600">
    <property type="entry name" value="Ribosomal protein S10 domain"/>
    <property type="match status" value="1"/>
</dbReference>
<dbReference type="HAMAP" id="MF_00508">
    <property type="entry name" value="Ribosomal_uS10"/>
    <property type="match status" value="1"/>
</dbReference>
<dbReference type="InterPro" id="IPR001848">
    <property type="entry name" value="Ribosomal_uS10"/>
</dbReference>
<dbReference type="InterPro" id="IPR018268">
    <property type="entry name" value="Ribosomal_uS10_CS"/>
</dbReference>
<dbReference type="InterPro" id="IPR027486">
    <property type="entry name" value="Ribosomal_uS10_dom"/>
</dbReference>
<dbReference type="InterPro" id="IPR036838">
    <property type="entry name" value="Ribosomal_uS10_dom_sf"/>
</dbReference>
<dbReference type="NCBIfam" id="NF001861">
    <property type="entry name" value="PRK00596.1"/>
    <property type="match status" value="1"/>
</dbReference>
<dbReference type="NCBIfam" id="TIGR01049">
    <property type="entry name" value="rpsJ_bact"/>
    <property type="match status" value="1"/>
</dbReference>
<dbReference type="PANTHER" id="PTHR11700">
    <property type="entry name" value="30S RIBOSOMAL PROTEIN S10 FAMILY MEMBER"/>
    <property type="match status" value="1"/>
</dbReference>
<dbReference type="Pfam" id="PF00338">
    <property type="entry name" value="Ribosomal_S10"/>
    <property type="match status" value="1"/>
</dbReference>
<dbReference type="PRINTS" id="PR00971">
    <property type="entry name" value="RIBOSOMALS10"/>
</dbReference>
<dbReference type="SMART" id="SM01403">
    <property type="entry name" value="Ribosomal_S10"/>
    <property type="match status" value="1"/>
</dbReference>
<dbReference type="SUPFAM" id="SSF54999">
    <property type="entry name" value="Ribosomal protein S10"/>
    <property type="match status" value="1"/>
</dbReference>
<dbReference type="PROSITE" id="PS00361">
    <property type="entry name" value="RIBOSOMAL_S10"/>
    <property type="match status" value="1"/>
</dbReference>
<gene>
    <name evidence="1" type="primary">rpsJ</name>
    <name type="ordered locus">Atu1947</name>
    <name type="ORF">AGR_C_3556</name>
</gene>
<organism>
    <name type="scientific">Agrobacterium fabrum (strain C58 / ATCC 33970)</name>
    <name type="common">Agrobacterium tumefaciens (strain C58)</name>
    <dbReference type="NCBI Taxonomy" id="176299"/>
    <lineage>
        <taxon>Bacteria</taxon>
        <taxon>Pseudomonadati</taxon>
        <taxon>Pseudomonadota</taxon>
        <taxon>Alphaproteobacteria</taxon>
        <taxon>Hyphomicrobiales</taxon>
        <taxon>Rhizobiaceae</taxon>
        <taxon>Rhizobium/Agrobacterium group</taxon>
        <taxon>Agrobacterium</taxon>
        <taxon>Agrobacterium tumefaciens complex</taxon>
    </lineage>
</organism>